<accession>P66761</accession>
<accession>A0A1R3Y1N2</accession>
<accession>Q50627</accession>
<accession>X2BL50</accession>
<organism>
    <name type="scientific">Mycobacterium bovis (strain ATCC BAA-935 / AF2122/97)</name>
    <dbReference type="NCBI Taxonomy" id="233413"/>
    <lineage>
        <taxon>Bacteria</taxon>
        <taxon>Bacillati</taxon>
        <taxon>Actinomycetota</taxon>
        <taxon>Actinomycetes</taxon>
        <taxon>Mycobacteriales</taxon>
        <taxon>Mycobacteriaceae</taxon>
        <taxon>Mycobacterium</taxon>
        <taxon>Mycobacterium tuberculosis complex</taxon>
    </lineage>
</organism>
<name>RUVC_MYCBO</name>
<feature type="chain" id="PRO_0000183111" description="Crossover junction endodeoxyribonuclease RuvC">
    <location>
        <begin position="1"/>
        <end position="188"/>
    </location>
</feature>
<feature type="active site" evidence="1">
    <location>
        <position position="7"/>
    </location>
</feature>
<feature type="active site" evidence="1">
    <location>
        <position position="68"/>
    </location>
</feature>
<feature type="active site" evidence="1">
    <location>
        <position position="141"/>
    </location>
</feature>
<feature type="binding site" evidence="1">
    <location>
        <position position="7"/>
    </location>
    <ligand>
        <name>Mg(2+)</name>
        <dbReference type="ChEBI" id="CHEBI:18420"/>
        <label>1</label>
    </ligand>
</feature>
<feature type="binding site" evidence="1">
    <location>
        <position position="68"/>
    </location>
    <ligand>
        <name>Mg(2+)</name>
        <dbReference type="ChEBI" id="CHEBI:18420"/>
        <label>2</label>
    </ligand>
</feature>
<feature type="binding site" evidence="1">
    <location>
        <position position="141"/>
    </location>
    <ligand>
        <name>Mg(2+)</name>
        <dbReference type="ChEBI" id="CHEBI:18420"/>
        <label>1</label>
    </ligand>
</feature>
<proteinExistence type="inferred from homology"/>
<protein>
    <recommendedName>
        <fullName evidence="1">Crossover junction endodeoxyribonuclease RuvC</fullName>
        <ecNumber evidence="1">3.1.21.10</ecNumber>
    </recommendedName>
    <alternativeName>
        <fullName evidence="1">Holliday junction nuclease RuvC</fullName>
    </alternativeName>
    <alternativeName>
        <fullName evidence="1">Holliday junction resolvase RuvC</fullName>
    </alternativeName>
</protein>
<gene>
    <name evidence="1" type="primary">ruvC</name>
    <name type="ordered locus">BQ2027_MB2625C</name>
</gene>
<keyword id="KW-0963">Cytoplasm</keyword>
<keyword id="KW-0227">DNA damage</keyword>
<keyword id="KW-0233">DNA recombination</keyword>
<keyword id="KW-0234">DNA repair</keyword>
<keyword id="KW-0238">DNA-binding</keyword>
<keyword id="KW-0255">Endonuclease</keyword>
<keyword id="KW-0378">Hydrolase</keyword>
<keyword id="KW-0460">Magnesium</keyword>
<keyword id="KW-0479">Metal-binding</keyword>
<keyword id="KW-0540">Nuclease</keyword>
<keyword id="KW-1185">Reference proteome</keyword>
<comment type="function">
    <text evidence="1">The RuvA-RuvB-RuvC complex processes Holliday junction (HJ) DNA during genetic recombination and DNA repair. Endonuclease that resolves HJ intermediates. Cleaves cruciform DNA by making single-stranded nicks across the HJ at symmetrical positions within the homologous arms, yielding a 5'-phosphate and a 3'-hydroxyl group; requires a central core of homology in the junction. The consensus cleavage sequence is 5'-(A/T)TT(C/G)-3'. Cleavage occurs on the 3'-side of the TT dinucleotide at the point of strand exchange. HJ branch migration catalyzed by RuvA-RuvB allows RuvC to scan DNA until it finds its consensus sequence, where it cleaves and resolves the cruciform DNA.</text>
</comment>
<comment type="catalytic activity">
    <reaction evidence="1">
        <text>Endonucleolytic cleavage at a junction such as a reciprocal single-stranded crossover between two homologous DNA duplexes (Holliday junction).</text>
        <dbReference type="EC" id="3.1.21.10"/>
    </reaction>
</comment>
<comment type="cofactor">
    <cofactor evidence="1">
        <name>Mg(2+)</name>
        <dbReference type="ChEBI" id="CHEBI:18420"/>
    </cofactor>
    <text evidence="1">Binds 2 Mg(2+) ion per subunit.</text>
</comment>
<comment type="subunit">
    <text evidence="1">Homodimer which binds Holliday junction (HJ) DNA. The HJ becomes 2-fold symmetrical on binding to RuvC with unstacked arms; it has a different conformation from HJ DNA in complex with RuvA. In the full resolvosome a probable DNA-RuvA(4)-RuvB(12)-RuvC(2) complex forms which resolves the HJ.</text>
</comment>
<comment type="subcellular location">
    <subcellularLocation>
        <location evidence="1">Cytoplasm</location>
    </subcellularLocation>
</comment>
<comment type="similarity">
    <text evidence="1 2">Belongs to the RuvC family.</text>
</comment>
<evidence type="ECO:0000255" key="1">
    <source>
        <dbReference type="HAMAP-Rule" id="MF_00034"/>
    </source>
</evidence>
<evidence type="ECO:0000305" key="2"/>
<reference key="1">
    <citation type="journal article" date="2003" name="Proc. Natl. Acad. Sci. U.S.A.">
        <title>The complete genome sequence of Mycobacterium bovis.</title>
        <authorList>
            <person name="Garnier T."/>
            <person name="Eiglmeier K."/>
            <person name="Camus J.-C."/>
            <person name="Medina N."/>
            <person name="Mansoor H."/>
            <person name="Pryor M."/>
            <person name="Duthoy S."/>
            <person name="Grondin S."/>
            <person name="Lacroix C."/>
            <person name="Monsempe C."/>
            <person name="Simon S."/>
            <person name="Harris B."/>
            <person name="Atkin R."/>
            <person name="Doggett J."/>
            <person name="Mayes R."/>
            <person name="Keating L."/>
            <person name="Wheeler P.R."/>
            <person name="Parkhill J."/>
            <person name="Barrell B.G."/>
            <person name="Cole S.T."/>
            <person name="Gordon S.V."/>
            <person name="Hewinson R.G."/>
        </authorList>
    </citation>
    <scope>NUCLEOTIDE SEQUENCE [LARGE SCALE GENOMIC DNA]</scope>
    <source>
        <strain>ATCC BAA-935 / AF2122/97</strain>
    </source>
</reference>
<reference key="2">
    <citation type="journal article" date="2017" name="Genome Announc.">
        <title>Updated reference genome sequence and annotation of Mycobacterium bovis AF2122/97.</title>
        <authorList>
            <person name="Malone K.M."/>
            <person name="Farrell D."/>
            <person name="Stuber T.P."/>
            <person name="Schubert O.T."/>
            <person name="Aebersold R."/>
            <person name="Robbe-Austerman S."/>
            <person name="Gordon S.V."/>
        </authorList>
    </citation>
    <scope>NUCLEOTIDE SEQUENCE [LARGE SCALE GENOMIC DNA]</scope>
    <scope>GENOME REANNOTATION</scope>
    <source>
        <strain>ATCC BAA-935 / AF2122/97</strain>
    </source>
</reference>
<dbReference type="EC" id="3.1.21.10" evidence="1"/>
<dbReference type="EMBL" id="LT708304">
    <property type="protein sequence ID" value="SIU01243.1"/>
    <property type="molecule type" value="Genomic_DNA"/>
</dbReference>
<dbReference type="RefSeq" id="NP_856271.1">
    <property type="nucleotide sequence ID" value="NC_002945.3"/>
</dbReference>
<dbReference type="RefSeq" id="WP_003413426.1">
    <property type="nucleotide sequence ID" value="NC_002945.4"/>
</dbReference>
<dbReference type="SMR" id="P66761"/>
<dbReference type="GeneID" id="45426596"/>
<dbReference type="KEGG" id="mbo:BQ2027_MB2625C"/>
<dbReference type="PATRIC" id="fig|233413.5.peg.2886"/>
<dbReference type="Proteomes" id="UP000001419">
    <property type="component" value="Chromosome"/>
</dbReference>
<dbReference type="GO" id="GO:0005737">
    <property type="term" value="C:cytoplasm"/>
    <property type="evidence" value="ECO:0007669"/>
    <property type="project" value="UniProtKB-SubCell"/>
</dbReference>
<dbReference type="GO" id="GO:0048476">
    <property type="term" value="C:Holliday junction resolvase complex"/>
    <property type="evidence" value="ECO:0007669"/>
    <property type="project" value="UniProtKB-UniRule"/>
</dbReference>
<dbReference type="GO" id="GO:0008821">
    <property type="term" value="F:crossover junction DNA endonuclease activity"/>
    <property type="evidence" value="ECO:0007669"/>
    <property type="project" value="UniProtKB-UniRule"/>
</dbReference>
<dbReference type="GO" id="GO:0003677">
    <property type="term" value="F:DNA binding"/>
    <property type="evidence" value="ECO:0007669"/>
    <property type="project" value="UniProtKB-KW"/>
</dbReference>
<dbReference type="GO" id="GO:0000287">
    <property type="term" value="F:magnesium ion binding"/>
    <property type="evidence" value="ECO:0007669"/>
    <property type="project" value="UniProtKB-UniRule"/>
</dbReference>
<dbReference type="GO" id="GO:0006310">
    <property type="term" value="P:DNA recombination"/>
    <property type="evidence" value="ECO:0007669"/>
    <property type="project" value="UniProtKB-UniRule"/>
</dbReference>
<dbReference type="GO" id="GO:0006281">
    <property type="term" value="P:DNA repair"/>
    <property type="evidence" value="ECO:0007669"/>
    <property type="project" value="UniProtKB-UniRule"/>
</dbReference>
<dbReference type="CDD" id="cd16962">
    <property type="entry name" value="RuvC"/>
    <property type="match status" value="1"/>
</dbReference>
<dbReference type="FunFam" id="3.30.420.10:FF:000002">
    <property type="entry name" value="Crossover junction endodeoxyribonuclease RuvC"/>
    <property type="match status" value="1"/>
</dbReference>
<dbReference type="Gene3D" id="3.30.420.10">
    <property type="entry name" value="Ribonuclease H-like superfamily/Ribonuclease H"/>
    <property type="match status" value="1"/>
</dbReference>
<dbReference type="HAMAP" id="MF_00034">
    <property type="entry name" value="RuvC"/>
    <property type="match status" value="1"/>
</dbReference>
<dbReference type="InterPro" id="IPR012337">
    <property type="entry name" value="RNaseH-like_sf"/>
</dbReference>
<dbReference type="InterPro" id="IPR036397">
    <property type="entry name" value="RNaseH_sf"/>
</dbReference>
<dbReference type="InterPro" id="IPR020563">
    <property type="entry name" value="X-over_junc_endoDNase_Mg_BS"/>
</dbReference>
<dbReference type="InterPro" id="IPR002176">
    <property type="entry name" value="X-over_junc_endoDNase_RuvC"/>
</dbReference>
<dbReference type="NCBIfam" id="TIGR00228">
    <property type="entry name" value="ruvC"/>
    <property type="match status" value="1"/>
</dbReference>
<dbReference type="PANTHER" id="PTHR30194">
    <property type="entry name" value="CROSSOVER JUNCTION ENDODEOXYRIBONUCLEASE RUVC"/>
    <property type="match status" value="1"/>
</dbReference>
<dbReference type="PANTHER" id="PTHR30194:SF3">
    <property type="entry name" value="CROSSOVER JUNCTION ENDODEOXYRIBONUCLEASE RUVC"/>
    <property type="match status" value="1"/>
</dbReference>
<dbReference type="Pfam" id="PF02075">
    <property type="entry name" value="RuvC"/>
    <property type="match status" value="1"/>
</dbReference>
<dbReference type="PRINTS" id="PR00696">
    <property type="entry name" value="RSOLVASERUVC"/>
</dbReference>
<dbReference type="SUPFAM" id="SSF53098">
    <property type="entry name" value="Ribonuclease H-like"/>
    <property type="match status" value="1"/>
</dbReference>
<dbReference type="PROSITE" id="PS01321">
    <property type="entry name" value="RUVC"/>
    <property type="match status" value="1"/>
</dbReference>
<sequence length="188" mass="19786">MRVMGVDPGLTRCGLSLIESGRGRQLTALDVDVVRTPSDAALAQRLLAISDAVEHWLDTHHPEVVAIERVFSQLNVTTVMGTAQAGGVIALAAAKRGVDVHFHTPSEVKAAVTGNGSADKAQVTAMVTKILALQAKPTPADAADALALAICHCWRAPTIARMAEATSRAEARAAQQRHAYLAKLKAAR</sequence>